<feature type="chain" id="PRO_0000444900" description="Protein METHYLENE BLUE SENSITIVITY 1">
    <location>
        <begin position="1"/>
        <end position="105"/>
    </location>
</feature>
<feature type="region of interest" description="Disordered" evidence="1">
    <location>
        <begin position="26"/>
        <end position="46"/>
    </location>
</feature>
<feature type="compositionally biased region" description="Basic and acidic residues" evidence="1">
    <location>
        <begin position="36"/>
        <end position="46"/>
    </location>
</feature>
<gene>
    <name evidence="4" type="primary">MBS1</name>
    <name evidence="5" type="ordered locus">At3g02790</name>
    <name evidence="6" type="ORF">F13E7.27</name>
</gene>
<proteinExistence type="evidence at transcript level"/>
<dbReference type="EMBL" id="AC018363">
    <property type="protein sequence ID" value="AAF26981.1"/>
    <property type="molecule type" value="Genomic_DNA"/>
</dbReference>
<dbReference type="EMBL" id="CP002686">
    <property type="protein sequence ID" value="AEE73860.1"/>
    <property type="molecule type" value="Genomic_DNA"/>
</dbReference>
<dbReference type="EMBL" id="AF361599">
    <property type="protein sequence ID" value="AAK32767.1"/>
    <property type="molecule type" value="mRNA"/>
</dbReference>
<dbReference type="EMBL" id="AY058229">
    <property type="protein sequence ID" value="AAL15403.1"/>
    <property type="molecule type" value="mRNA"/>
</dbReference>
<dbReference type="RefSeq" id="NP_566182.1">
    <property type="nucleotide sequence ID" value="NM_111147.3"/>
</dbReference>
<dbReference type="IntAct" id="Q9M8S0">
    <property type="interactions" value="3"/>
</dbReference>
<dbReference type="STRING" id="3702.Q9M8S0"/>
<dbReference type="MetOSite" id="Q9M8S0"/>
<dbReference type="PaxDb" id="3702-AT3G02790.1"/>
<dbReference type="ProteomicsDB" id="238851"/>
<dbReference type="EnsemblPlants" id="AT3G02790.1">
    <property type="protein sequence ID" value="AT3G02790.1"/>
    <property type="gene ID" value="AT3G02790"/>
</dbReference>
<dbReference type="GeneID" id="820985"/>
<dbReference type="Gramene" id="AT3G02790.1">
    <property type="protein sequence ID" value="AT3G02790.1"/>
    <property type="gene ID" value="AT3G02790"/>
</dbReference>
<dbReference type="KEGG" id="ath:AT3G02790"/>
<dbReference type="Araport" id="AT3G02790"/>
<dbReference type="TAIR" id="AT3G02790">
    <property type="gene designation" value="MBS1"/>
</dbReference>
<dbReference type="eggNOG" id="ENOG502S122">
    <property type="taxonomic scope" value="Eukaryota"/>
</dbReference>
<dbReference type="HOGENOM" id="CLU_160241_1_0_1"/>
<dbReference type="InParanoid" id="Q9M8S0"/>
<dbReference type="OMA" id="HESKHPN"/>
<dbReference type="OrthoDB" id="510420at2759"/>
<dbReference type="PhylomeDB" id="Q9M8S0"/>
<dbReference type="PRO" id="PR:Q9M8S0"/>
<dbReference type="Proteomes" id="UP000006548">
    <property type="component" value="Chromosome 3"/>
</dbReference>
<dbReference type="ExpressionAtlas" id="Q9M8S0">
    <property type="expression patterns" value="baseline and differential"/>
</dbReference>
<dbReference type="GO" id="GO:0005737">
    <property type="term" value="C:cytoplasm"/>
    <property type="evidence" value="ECO:0000314"/>
    <property type="project" value="UniProtKB"/>
</dbReference>
<dbReference type="GO" id="GO:0010494">
    <property type="term" value="C:cytoplasmic stress granule"/>
    <property type="evidence" value="ECO:0000314"/>
    <property type="project" value="UniProtKB"/>
</dbReference>
<dbReference type="GO" id="GO:0005634">
    <property type="term" value="C:nucleus"/>
    <property type="evidence" value="ECO:0000314"/>
    <property type="project" value="UniProtKB"/>
</dbReference>
<dbReference type="GO" id="GO:0003700">
    <property type="term" value="F:DNA-binding transcription factor activity"/>
    <property type="evidence" value="ECO:0000250"/>
    <property type="project" value="TAIR"/>
</dbReference>
<dbReference type="GO" id="GO:0000976">
    <property type="term" value="F:transcription cis-regulatory region binding"/>
    <property type="evidence" value="ECO:0000353"/>
    <property type="project" value="TAIR"/>
</dbReference>
<dbReference type="GO" id="GO:0071452">
    <property type="term" value="P:cellular response to singlet oxygen"/>
    <property type="evidence" value="ECO:0000315"/>
    <property type="project" value="TAIR"/>
</dbReference>
<dbReference type="GO" id="GO:0009631">
    <property type="term" value="P:cold acclimation"/>
    <property type="evidence" value="ECO:0000315"/>
    <property type="project" value="UniProtKB"/>
</dbReference>
<dbReference type="GO" id="GO:0006355">
    <property type="term" value="P:regulation of DNA-templated transcription"/>
    <property type="evidence" value="ECO:0000304"/>
    <property type="project" value="TAIR"/>
</dbReference>
<dbReference type="GO" id="GO:1900055">
    <property type="term" value="P:regulation of leaf senescence"/>
    <property type="evidence" value="ECO:0000315"/>
    <property type="project" value="UniProtKB"/>
</dbReference>
<dbReference type="GO" id="GO:0009644">
    <property type="term" value="P:response to high light intensity"/>
    <property type="evidence" value="ECO:0000315"/>
    <property type="project" value="UniProtKB"/>
</dbReference>
<dbReference type="GO" id="GO:0080183">
    <property type="term" value="P:response to photooxidative stress"/>
    <property type="evidence" value="ECO:0000315"/>
    <property type="project" value="UniProtKB"/>
</dbReference>
<dbReference type="InterPro" id="IPR045230">
    <property type="entry name" value="MBS1/2-like"/>
</dbReference>
<dbReference type="PANTHER" id="PTHR21213">
    <property type="entry name" value="GEO09665P1-RELATED"/>
    <property type="match status" value="1"/>
</dbReference>
<dbReference type="PANTHER" id="PTHR21213:SF24">
    <property type="entry name" value="PROTEIN METHYLENE BLUE SENSITIVITY 1"/>
    <property type="match status" value="1"/>
</dbReference>
<dbReference type="SUPFAM" id="SSF118359">
    <property type="entry name" value="Expressed protein At2g23090/F21P24.15"/>
    <property type="match status" value="1"/>
</dbReference>
<organism>
    <name type="scientific">Arabidopsis thaliana</name>
    <name type="common">Mouse-ear cress</name>
    <dbReference type="NCBI Taxonomy" id="3702"/>
    <lineage>
        <taxon>Eukaryota</taxon>
        <taxon>Viridiplantae</taxon>
        <taxon>Streptophyta</taxon>
        <taxon>Embryophyta</taxon>
        <taxon>Tracheophyta</taxon>
        <taxon>Spermatophyta</taxon>
        <taxon>Magnoliopsida</taxon>
        <taxon>eudicotyledons</taxon>
        <taxon>Gunneridae</taxon>
        <taxon>Pentapetalae</taxon>
        <taxon>rosids</taxon>
        <taxon>malvids</taxon>
        <taxon>Brassicales</taxon>
        <taxon>Brassicaceae</taxon>
        <taxon>Camelineae</taxon>
        <taxon>Arabidopsis</taxon>
    </lineage>
</organism>
<sequence length="105" mass="11278">MTGKAKPKKHTAKEIQAKIDAALTNRGGGKAGIADRTGKEKGGHAKYECPHCKITAPGLKTMQIHHESKHPNIIYEESKLVNLHAVLAPVAESKPKPGIRGSLKK</sequence>
<comment type="function">
    <text evidence="2 3">Required for acclimation to reactive oxygen species (ROS) responses downstream of beta-cyclocitral (beta-cc) or mediated by dihydroactinidiolide, including singlet oxygen 1O(2) detoxification reactions, especially upon light-mediated photooxidative stress, and leading to programmed cell death (PubMed:24151292, PubMed:27813110). Prevents leaf senescence (PubMed:24151292). Involved in cold acclimation (PubMed:27813110).</text>
</comment>
<comment type="subcellular location">
    <subcellularLocation>
        <location evidence="2 3">Nucleus</location>
    </subcellularLocation>
    <subcellularLocation>
        <location evidence="2 3">Cytoplasm</location>
    </subcellularLocation>
    <subcellularLocation>
        <location evidence="2">Cytoplasm</location>
        <location evidence="2">Stress granule</location>
    </subcellularLocation>
    <text evidence="2 3">Moves from homogeneous distribution in the cytosol to discrete spots (e.g. stress granules (SGs) and processing bodies (PBs)) in response to singlet oxygen 1O(2) exposure (PubMed:24151292). Accumulates in nucleus after beta-cyclocitral (beta-cc) treatment (PubMed:27813110).</text>
</comment>
<comment type="tissue specificity">
    <text evidence="3">Mainly expressed in the epidermis.</text>
</comment>
<comment type="induction">
    <text evidence="2 3">By high light (PubMed:24151292). Triggered by the carotenoid metabolite beta-cyclocitral (beta-cc) (PubMed:27813110).</text>
</comment>
<comment type="disruption phenotype">
    <text evidence="2 3">Normal plants under standard growth conditions, but severe symptoms of photooxidative damage under excess light due to a deficient induction of singlet oxygen 1O(2) detoxification reactions, thus leading to pale leaf phenotype, early senescence and lack of anthocyanin accumulation (PubMed:24151292, PubMed:27813110). Increased susceptibility to low temperatures and high photon flux density (PFD) conditions. Increased lipid peroxidation in response to beta-cyclocitral (beta-cc) associated with reduced induction of reactive oxygen species (ROS) responsive genes (e.g. AAA, LTI30, ZAT12 and WRKY40). Altered induction of gene (e.g. AAA, OXI1, CAT2, APX1 and RD20) expression in response to the lactone dihydroactinidiolide (PubMed:27813110). Accumulation of singlet oxygen 1O(2) in chloroplasts in response to light stress. Early senescence of the older leaves. Plants lacking both MBS1 and MBS2 exhibit premature leaf senescence (PubMed:24151292).</text>
</comment>
<keyword id="KW-0963">Cytoplasm</keyword>
<keyword id="KW-0539">Nucleus</keyword>
<keyword id="KW-1185">Reference proteome</keyword>
<keyword id="KW-0346">Stress response</keyword>
<protein>
    <recommendedName>
        <fullName evidence="4">Protein METHYLENE BLUE SENSITIVITY 1</fullName>
    </recommendedName>
</protein>
<evidence type="ECO:0000256" key="1">
    <source>
        <dbReference type="SAM" id="MobiDB-lite"/>
    </source>
</evidence>
<evidence type="ECO:0000269" key="2">
    <source>
    </source>
</evidence>
<evidence type="ECO:0000269" key="3">
    <source>
    </source>
</evidence>
<evidence type="ECO:0000303" key="4">
    <source>
    </source>
</evidence>
<evidence type="ECO:0000312" key="5">
    <source>
        <dbReference type="Araport" id="AT3G02790"/>
    </source>
</evidence>
<evidence type="ECO:0000312" key="6">
    <source>
        <dbReference type="EMBL" id="AAF26981.1"/>
    </source>
</evidence>
<accession>Q9M8S0</accession>
<reference key="1">
    <citation type="journal article" date="2000" name="Nature">
        <title>Sequence and analysis of chromosome 3 of the plant Arabidopsis thaliana.</title>
        <authorList>
            <person name="Salanoubat M."/>
            <person name="Lemcke K."/>
            <person name="Rieger M."/>
            <person name="Ansorge W."/>
            <person name="Unseld M."/>
            <person name="Fartmann B."/>
            <person name="Valle G."/>
            <person name="Bloecker H."/>
            <person name="Perez-Alonso M."/>
            <person name="Obermaier B."/>
            <person name="Delseny M."/>
            <person name="Boutry M."/>
            <person name="Grivell L.A."/>
            <person name="Mache R."/>
            <person name="Puigdomenech P."/>
            <person name="De Simone V."/>
            <person name="Choisne N."/>
            <person name="Artiguenave F."/>
            <person name="Robert C."/>
            <person name="Brottier P."/>
            <person name="Wincker P."/>
            <person name="Cattolico L."/>
            <person name="Weissenbach J."/>
            <person name="Saurin W."/>
            <person name="Quetier F."/>
            <person name="Schaefer M."/>
            <person name="Mueller-Auer S."/>
            <person name="Gabel C."/>
            <person name="Fuchs M."/>
            <person name="Benes V."/>
            <person name="Wurmbach E."/>
            <person name="Drzonek H."/>
            <person name="Erfle H."/>
            <person name="Jordan N."/>
            <person name="Bangert S."/>
            <person name="Wiedelmann R."/>
            <person name="Kranz H."/>
            <person name="Voss H."/>
            <person name="Holland R."/>
            <person name="Brandt P."/>
            <person name="Nyakatura G."/>
            <person name="Vezzi A."/>
            <person name="D'Angelo M."/>
            <person name="Pallavicini A."/>
            <person name="Toppo S."/>
            <person name="Simionati B."/>
            <person name="Conrad A."/>
            <person name="Hornischer K."/>
            <person name="Kauer G."/>
            <person name="Loehnert T.-H."/>
            <person name="Nordsiek G."/>
            <person name="Reichelt J."/>
            <person name="Scharfe M."/>
            <person name="Schoen O."/>
            <person name="Bargues M."/>
            <person name="Terol J."/>
            <person name="Climent J."/>
            <person name="Navarro P."/>
            <person name="Collado C."/>
            <person name="Perez-Perez A."/>
            <person name="Ottenwaelder B."/>
            <person name="Duchemin D."/>
            <person name="Cooke R."/>
            <person name="Laudie M."/>
            <person name="Berger-Llauro C."/>
            <person name="Purnelle B."/>
            <person name="Masuy D."/>
            <person name="de Haan M."/>
            <person name="Maarse A.C."/>
            <person name="Alcaraz J.-P."/>
            <person name="Cottet A."/>
            <person name="Casacuberta E."/>
            <person name="Monfort A."/>
            <person name="Argiriou A."/>
            <person name="Flores M."/>
            <person name="Liguori R."/>
            <person name="Vitale D."/>
            <person name="Mannhaupt G."/>
            <person name="Haase D."/>
            <person name="Schoof H."/>
            <person name="Rudd S."/>
            <person name="Zaccaria P."/>
            <person name="Mewes H.-W."/>
            <person name="Mayer K.F.X."/>
            <person name="Kaul S."/>
            <person name="Town C.D."/>
            <person name="Koo H.L."/>
            <person name="Tallon L.J."/>
            <person name="Jenkins J."/>
            <person name="Rooney T."/>
            <person name="Rizzo M."/>
            <person name="Walts A."/>
            <person name="Utterback T."/>
            <person name="Fujii C.Y."/>
            <person name="Shea T.P."/>
            <person name="Creasy T.H."/>
            <person name="Haas B."/>
            <person name="Maiti R."/>
            <person name="Wu D."/>
            <person name="Peterson J."/>
            <person name="Van Aken S."/>
            <person name="Pai G."/>
            <person name="Militscher J."/>
            <person name="Sellers P."/>
            <person name="Gill J.E."/>
            <person name="Feldblyum T.V."/>
            <person name="Preuss D."/>
            <person name="Lin X."/>
            <person name="Nierman W.C."/>
            <person name="Salzberg S.L."/>
            <person name="White O."/>
            <person name="Venter J.C."/>
            <person name="Fraser C.M."/>
            <person name="Kaneko T."/>
            <person name="Nakamura Y."/>
            <person name="Sato S."/>
            <person name="Kato T."/>
            <person name="Asamizu E."/>
            <person name="Sasamoto S."/>
            <person name="Kimura T."/>
            <person name="Idesawa K."/>
            <person name="Kawashima K."/>
            <person name="Kishida Y."/>
            <person name="Kiyokawa C."/>
            <person name="Kohara M."/>
            <person name="Matsumoto M."/>
            <person name="Matsuno A."/>
            <person name="Muraki A."/>
            <person name="Nakayama S."/>
            <person name="Nakazaki N."/>
            <person name="Shinpo S."/>
            <person name="Takeuchi C."/>
            <person name="Wada T."/>
            <person name="Watanabe A."/>
            <person name="Yamada M."/>
            <person name="Yasuda M."/>
            <person name="Tabata S."/>
        </authorList>
    </citation>
    <scope>NUCLEOTIDE SEQUENCE [LARGE SCALE GENOMIC DNA]</scope>
    <source>
        <strain>cv. Columbia</strain>
    </source>
</reference>
<reference key="2">
    <citation type="journal article" date="2017" name="Plant J.">
        <title>Araport11: a complete reannotation of the Arabidopsis thaliana reference genome.</title>
        <authorList>
            <person name="Cheng C.Y."/>
            <person name="Krishnakumar V."/>
            <person name="Chan A.P."/>
            <person name="Thibaud-Nissen F."/>
            <person name="Schobel S."/>
            <person name="Town C.D."/>
        </authorList>
    </citation>
    <scope>GENOME REANNOTATION</scope>
    <source>
        <strain>cv. Columbia</strain>
    </source>
</reference>
<reference key="3">
    <citation type="journal article" date="2003" name="Science">
        <title>Empirical analysis of transcriptional activity in the Arabidopsis genome.</title>
        <authorList>
            <person name="Yamada K."/>
            <person name="Lim J."/>
            <person name="Dale J.M."/>
            <person name="Chen H."/>
            <person name="Shinn P."/>
            <person name="Palm C.J."/>
            <person name="Southwick A.M."/>
            <person name="Wu H.C."/>
            <person name="Kim C.J."/>
            <person name="Nguyen M."/>
            <person name="Pham P.K."/>
            <person name="Cheuk R.F."/>
            <person name="Karlin-Newmann G."/>
            <person name="Liu S.X."/>
            <person name="Lam B."/>
            <person name="Sakano H."/>
            <person name="Wu T."/>
            <person name="Yu G."/>
            <person name="Miranda M."/>
            <person name="Quach H.L."/>
            <person name="Tripp M."/>
            <person name="Chang C.H."/>
            <person name="Lee J.M."/>
            <person name="Toriumi M.J."/>
            <person name="Chan M.M."/>
            <person name="Tang C.C."/>
            <person name="Onodera C.S."/>
            <person name="Deng J.M."/>
            <person name="Akiyama K."/>
            <person name="Ansari Y."/>
            <person name="Arakawa T."/>
            <person name="Banh J."/>
            <person name="Banno F."/>
            <person name="Bowser L."/>
            <person name="Brooks S.Y."/>
            <person name="Carninci P."/>
            <person name="Chao Q."/>
            <person name="Choy N."/>
            <person name="Enju A."/>
            <person name="Goldsmith A.D."/>
            <person name="Gurjal M."/>
            <person name="Hansen N.F."/>
            <person name="Hayashizaki Y."/>
            <person name="Johnson-Hopson C."/>
            <person name="Hsuan V.W."/>
            <person name="Iida K."/>
            <person name="Karnes M."/>
            <person name="Khan S."/>
            <person name="Koesema E."/>
            <person name="Ishida J."/>
            <person name="Jiang P.X."/>
            <person name="Jones T."/>
            <person name="Kawai J."/>
            <person name="Kamiya A."/>
            <person name="Meyers C."/>
            <person name="Nakajima M."/>
            <person name="Narusaka M."/>
            <person name="Seki M."/>
            <person name="Sakurai T."/>
            <person name="Satou M."/>
            <person name="Tamse R."/>
            <person name="Vaysberg M."/>
            <person name="Wallender E.K."/>
            <person name="Wong C."/>
            <person name="Yamamura Y."/>
            <person name="Yuan S."/>
            <person name="Shinozaki K."/>
            <person name="Davis R.W."/>
            <person name="Theologis A."/>
            <person name="Ecker J.R."/>
        </authorList>
    </citation>
    <scope>NUCLEOTIDE SEQUENCE [LARGE SCALE MRNA]</scope>
    <source>
        <strain>cv. Columbia</strain>
    </source>
</reference>
<reference key="4">
    <citation type="journal article" date="2013" name="Plant Cell">
        <title>A mediator of singlet oxygen responses in Chlamydomonas reinhardtii and Arabidopsis identified by a luciferase-based genetic screen in algal cells.</title>
        <authorList>
            <person name="Shao N."/>
            <person name="Duan G.Y."/>
            <person name="Bock R."/>
        </authorList>
    </citation>
    <scope>FUNCTION</scope>
    <scope>DISRUPTION PHENOTYPE</scope>
    <scope>SUBCELLULAR LOCATION</scope>
    <scope>INDUCTION BY HIGH LIGHT</scope>
    <source>
        <strain>cv. Columbia</strain>
    </source>
</reference>
<reference key="5">
    <citation type="journal article" date="2017" name="Plant Cell Environ.">
        <title>METHYLENE BLUE SENSITIVITY 1 (MBS1) is required for acclimation of Arabidopsis to singlet oxygen and acts downstream of beta-cyclocitral.</title>
        <authorList>
            <person name="Shumbe L."/>
            <person name="D'Alessandro S."/>
            <person name="Shao N."/>
            <person name="Chevalier A."/>
            <person name="Ksas B."/>
            <person name="Bock R."/>
            <person name="Havaux M."/>
        </authorList>
    </citation>
    <scope>FUNCTION</scope>
    <scope>DISRUPTION PHENOTYPE</scope>
    <scope>TISSUE SPECIFICITY</scope>
    <scope>SUBCELLULAR LOCATION</scope>
    <scope>INDUCTION BY BETA-CYCLOCITRAL</scope>
    <source>
        <strain>cv. Columbia</strain>
    </source>
</reference>
<name>MBS1_ARATH</name>